<feature type="chain" id="PRO_0000252933" description="Fluoride-specific ion channel FluC 2">
    <location>
        <begin position="1"/>
        <end position="148"/>
    </location>
</feature>
<feature type="transmembrane region" description="Helical" evidence="1">
    <location>
        <begin position="23"/>
        <end position="43"/>
    </location>
</feature>
<feature type="transmembrane region" description="Helical" evidence="1">
    <location>
        <begin position="61"/>
        <end position="81"/>
    </location>
</feature>
<feature type="transmembrane region" description="Helical" evidence="1">
    <location>
        <begin position="92"/>
        <end position="112"/>
    </location>
</feature>
<feature type="transmembrane region" description="Helical" evidence="1">
    <location>
        <begin position="120"/>
        <end position="140"/>
    </location>
</feature>
<feature type="binding site" evidence="1">
    <location>
        <position position="99"/>
    </location>
    <ligand>
        <name>Na(+)</name>
        <dbReference type="ChEBI" id="CHEBI:29101"/>
        <note>structural</note>
    </ligand>
</feature>
<feature type="binding site" evidence="1">
    <location>
        <position position="102"/>
    </location>
    <ligand>
        <name>Na(+)</name>
        <dbReference type="ChEBI" id="CHEBI:29101"/>
        <note>structural</note>
    </ligand>
</feature>
<sequence length="148" mass="15609">MHEAPRGFLEGEALRPRPFRAGLGHLGWIFAGGALGAAARLAVEGAARRLAPAAYEAFPWGTLAANAAGSFLIAIFGTLIFERFVGERARAFWVLGFLGSLTTFSSYALHTLRGWEASPLLGGLYGGGSLLLGLLAALAGLRLTRRLL</sequence>
<accession>Q1AYN1</accession>
<organism>
    <name type="scientific">Rubrobacter xylanophilus (strain DSM 9941 / JCM 11954 / NBRC 16129 / PRD-1)</name>
    <dbReference type="NCBI Taxonomy" id="266117"/>
    <lineage>
        <taxon>Bacteria</taxon>
        <taxon>Bacillati</taxon>
        <taxon>Actinomycetota</taxon>
        <taxon>Rubrobacteria</taxon>
        <taxon>Rubrobacterales</taxon>
        <taxon>Rubrobacteraceae</taxon>
        <taxon>Rubrobacter</taxon>
    </lineage>
</organism>
<name>FLUC2_RUBXD</name>
<protein>
    <recommendedName>
        <fullName evidence="1">Fluoride-specific ion channel FluC 2</fullName>
    </recommendedName>
</protein>
<proteinExistence type="inferred from homology"/>
<dbReference type="EMBL" id="CP000386">
    <property type="protein sequence ID" value="ABG03497.1"/>
    <property type="status" value="ALT_INIT"/>
    <property type="molecule type" value="Genomic_DNA"/>
</dbReference>
<dbReference type="SMR" id="Q1AYN1"/>
<dbReference type="STRING" id="266117.Rxyl_0523"/>
<dbReference type="KEGG" id="rxy:Rxyl_0523"/>
<dbReference type="eggNOG" id="COG0239">
    <property type="taxonomic scope" value="Bacteria"/>
</dbReference>
<dbReference type="HOGENOM" id="CLU_1260668_0_0_11"/>
<dbReference type="Proteomes" id="UP000006637">
    <property type="component" value="Chromosome"/>
</dbReference>
<dbReference type="GO" id="GO:0005886">
    <property type="term" value="C:plasma membrane"/>
    <property type="evidence" value="ECO:0007669"/>
    <property type="project" value="UniProtKB-SubCell"/>
</dbReference>
<dbReference type="GO" id="GO:0062054">
    <property type="term" value="F:fluoride channel activity"/>
    <property type="evidence" value="ECO:0007669"/>
    <property type="project" value="UniProtKB-UniRule"/>
</dbReference>
<dbReference type="GO" id="GO:0046872">
    <property type="term" value="F:metal ion binding"/>
    <property type="evidence" value="ECO:0007669"/>
    <property type="project" value="UniProtKB-KW"/>
</dbReference>
<dbReference type="GO" id="GO:0140114">
    <property type="term" value="P:cellular detoxification of fluoride"/>
    <property type="evidence" value="ECO:0007669"/>
    <property type="project" value="UniProtKB-UniRule"/>
</dbReference>
<dbReference type="HAMAP" id="MF_00454">
    <property type="entry name" value="FluC"/>
    <property type="match status" value="1"/>
</dbReference>
<dbReference type="InterPro" id="IPR003691">
    <property type="entry name" value="FluC"/>
</dbReference>
<dbReference type="PANTHER" id="PTHR28259">
    <property type="entry name" value="FLUORIDE EXPORT PROTEIN 1-RELATED"/>
    <property type="match status" value="1"/>
</dbReference>
<dbReference type="PANTHER" id="PTHR28259:SF1">
    <property type="entry name" value="FLUORIDE EXPORT PROTEIN 1-RELATED"/>
    <property type="match status" value="1"/>
</dbReference>
<dbReference type="Pfam" id="PF02537">
    <property type="entry name" value="CRCB"/>
    <property type="match status" value="1"/>
</dbReference>
<keyword id="KW-1003">Cell membrane</keyword>
<keyword id="KW-0407">Ion channel</keyword>
<keyword id="KW-0406">Ion transport</keyword>
<keyword id="KW-0472">Membrane</keyword>
<keyword id="KW-0479">Metal-binding</keyword>
<keyword id="KW-1185">Reference proteome</keyword>
<keyword id="KW-0915">Sodium</keyword>
<keyword id="KW-0812">Transmembrane</keyword>
<keyword id="KW-1133">Transmembrane helix</keyword>
<keyword id="KW-0813">Transport</keyword>
<reference key="1">
    <citation type="submission" date="2006-06" db="EMBL/GenBank/DDBJ databases">
        <title>Complete sequence of Rubrobacter xylanophilus DSM 9941.</title>
        <authorList>
            <consortium name="US DOE Joint Genome Institute"/>
            <person name="Copeland A."/>
            <person name="Lucas S."/>
            <person name="Lapidus A."/>
            <person name="Barry K."/>
            <person name="Detter J.C."/>
            <person name="Glavina del Rio T."/>
            <person name="Hammon N."/>
            <person name="Israni S."/>
            <person name="Dalin E."/>
            <person name="Tice H."/>
            <person name="Pitluck S."/>
            <person name="Munk A.C."/>
            <person name="Brettin T."/>
            <person name="Bruce D."/>
            <person name="Han C."/>
            <person name="Tapia R."/>
            <person name="Gilna P."/>
            <person name="Schmutz J."/>
            <person name="Larimer F."/>
            <person name="Land M."/>
            <person name="Hauser L."/>
            <person name="Kyrpides N."/>
            <person name="Lykidis A."/>
            <person name="da Costa M.S."/>
            <person name="Rainey F.A."/>
            <person name="Empadinhas N."/>
            <person name="Jolivet E."/>
            <person name="Battista J.R."/>
            <person name="Richardson P."/>
        </authorList>
    </citation>
    <scope>NUCLEOTIDE SEQUENCE [LARGE SCALE GENOMIC DNA]</scope>
    <source>
        <strain>DSM 9941 / JCM 11954 / NBRC 16129 / PRD-1</strain>
    </source>
</reference>
<evidence type="ECO:0000255" key="1">
    <source>
        <dbReference type="HAMAP-Rule" id="MF_00454"/>
    </source>
</evidence>
<evidence type="ECO:0000305" key="2"/>
<gene>
    <name evidence="1" type="primary">fluC2</name>
    <name evidence="1" type="synonym">crcB2</name>
    <name type="ordered locus">Rxyl_0523</name>
</gene>
<comment type="function">
    <text evidence="1">Fluoride-specific ion channel. Important for reducing fluoride concentration in the cell, thus reducing its toxicity.</text>
</comment>
<comment type="catalytic activity">
    <reaction evidence="1">
        <text>fluoride(in) = fluoride(out)</text>
        <dbReference type="Rhea" id="RHEA:76159"/>
        <dbReference type="ChEBI" id="CHEBI:17051"/>
    </reaction>
    <physiologicalReaction direction="left-to-right" evidence="1">
        <dbReference type="Rhea" id="RHEA:76160"/>
    </physiologicalReaction>
</comment>
<comment type="activity regulation">
    <text evidence="1">Na(+) is not transported, but it plays an essential structural role and its presence is essential for fluoride channel function.</text>
</comment>
<comment type="subcellular location">
    <subcellularLocation>
        <location evidence="1">Cell membrane</location>
        <topology evidence="1">Multi-pass membrane protein</topology>
    </subcellularLocation>
</comment>
<comment type="similarity">
    <text evidence="1">Belongs to the fluoride channel Fluc/FEX (TC 1.A.43) family.</text>
</comment>
<comment type="sequence caution" evidence="2">
    <conflict type="erroneous initiation">
        <sequence resource="EMBL-CDS" id="ABG03497"/>
    </conflict>
</comment>